<accession>A6V1P0</accession>
<proteinExistence type="inferred from homology"/>
<feature type="chain" id="PRO_1000065678" description="Bifunctional polymyxin resistance protein ArnA">
    <location>
        <begin position="1"/>
        <end position="662"/>
    </location>
</feature>
<feature type="region of interest" description="Formyltransferase ArnAFT">
    <location>
        <begin position="1"/>
        <end position="307"/>
    </location>
</feature>
<feature type="region of interest" description="Dehydrogenase ArnADH">
    <location>
        <begin position="316"/>
        <end position="662"/>
    </location>
</feature>
<feature type="active site" description="Proton donor; for formyltransferase activity" evidence="1">
    <location>
        <position position="106"/>
    </location>
</feature>
<feature type="active site" description="Proton acceptor; for decarboxylase activity" evidence="1">
    <location>
        <position position="436"/>
    </location>
</feature>
<feature type="active site" description="Proton donor; for decarboxylase activity" evidence="1">
    <location>
        <position position="620"/>
    </location>
</feature>
<feature type="binding site" evidence="1">
    <location>
        <position position="116"/>
    </location>
    <ligand>
        <name>(6R)-10-formyltetrahydrofolate</name>
        <dbReference type="ChEBI" id="CHEBI:195366"/>
    </ligand>
</feature>
<feature type="binding site" evidence="1">
    <location>
        <begin position="138"/>
        <end position="142"/>
    </location>
    <ligand>
        <name>(6R)-10-formyltetrahydrofolate</name>
        <dbReference type="ChEBI" id="CHEBI:195366"/>
    </ligand>
</feature>
<feature type="binding site" evidence="1">
    <location>
        <position position="349"/>
    </location>
    <ligand>
        <name>NAD(+)</name>
        <dbReference type="ChEBI" id="CHEBI:57540"/>
    </ligand>
</feature>
<feature type="binding site" evidence="1">
    <location>
        <begin position="370"/>
        <end position="371"/>
    </location>
    <ligand>
        <name>NAD(+)</name>
        <dbReference type="ChEBI" id="CHEBI:57540"/>
    </ligand>
</feature>
<feature type="binding site" evidence="1">
    <location>
        <position position="395"/>
    </location>
    <ligand>
        <name>UDP-alpha-D-glucuronate</name>
        <dbReference type="ChEBI" id="CHEBI:58052"/>
    </ligand>
</feature>
<feature type="binding site" evidence="1">
    <location>
        <position position="400"/>
    </location>
    <ligand>
        <name>UDP-alpha-D-glucuronate</name>
        <dbReference type="ChEBI" id="CHEBI:58052"/>
    </ligand>
</feature>
<feature type="binding site" evidence="1">
    <location>
        <begin position="434"/>
        <end position="435"/>
    </location>
    <ligand>
        <name>UDP-alpha-D-glucuronate</name>
        <dbReference type="ChEBI" id="CHEBI:58052"/>
    </ligand>
</feature>
<feature type="binding site" evidence="1">
    <location>
        <position position="462"/>
    </location>
    <ligand>
        <name>UDP-alpha-D-glucuronate</name>
        <dbReference type="ChEBI" id="CHEBI:58052"/>
    </ligand>
</feature>
<feature type="binding site" evidence="1">
    <location>
        <position position="493"/>
    </location>
    <ligand>
        <name>UDP-alpha-D-glucuronate</name>
        <dbReference type="ChEBI" id="CHEBI:58052"/>
    </ligand>
</feature>
<feature type="binding site" evidence="1">
    <location>
        <begin position="527"/>
        <end position="536"/>
    </location>
    <ligand>
        <name>UDP-alpha-D-glucuronate</name>
        <dbReference type="ChEBI" id="CHEBI:58052"/>
    </ligand>
</feature>
<feature type="binding site" evidence="1">
    <location>
        <position position="614"/>
    </location>
    <ligand>
        <name>UDP-alpha-D-glucuronate</name>
        <dbReference type="ChEBI" id="CHEBI:58052"/>
    </ligand>
</feature>
<feature type="site" description="Transition state stabilizer" evidence="1">
    <location>
        <position position="104"/>
    </location>
</feature>
<feature type="site" description="Raises pKa of active site His" evidence="1">
    <location>
        <position position="142"/>
    </location>
</feature>
<evidence type="ECO:0000255" key="1">
    <source>
        <dbReference type="HAMAP-Rule" id="MF_01166"/>
    </source>
</evidence>
<dbReference type="EC" id="2.1.2.13" evidence="1"/>
<dbReference type="EC" id="1.1.1.305" evidence="1"/>
<dbReference type="EMBL" id="CP000744">
    <property type="protein sequence ID" value="ABR84014.1"/>
    <property type="molecule type" value="Genomic_DNA"/>
</dbReference>
<dbReference type="RefSeq" id="WP_012074758.1">
    <property type="nucleotide sequence ID" value="NC_009656.1"/>
</dbReference>
<dbReference type="SMR" id="A6V1P0"/>
<dbReference type="KEGG" id="pap:PSPA7_1591"/>
<dbReference type="HOGENOM" id="CLU_007383_23_0_6"/>
<dbReference type="UniPathway" id="UPA00030"/>
<dbReference type="UniPathway" id="UPA00032">
    <property type="reaction ID" value="UER00492"/>
</dbReference>
<dbReference type="UniPathway" id="UPA00032">
    <property type="reaction ID" value="UER00494"/>
</dbReference>
<dbReference type="Proteomes" id="UP000001582">
    <property type="component" value="Chromosome"/>
</dbReference>
<dbReference type="GO" id="GO:0016020">
    <property type="term" value="C:membrane"/>
    <property type="evidence" value="ECO:0007669"/>
    <property type="project" value="GOC"/>
</dbReference>
<dbReference type="GO" id="GO:0016831">
    <property type="term" value="F:carboxy-lyase activity"/>
    <property type="evidence" value="ECO:0007669"/>
    <property type="project" value="InterPro"/>
</dbReference>
<dbReference type="GO" id="GO:0099619">
    <property type="term" value="F:UDP-4-amino-4-deoxy-L-arabinose formyltransferase activity"/>
    <property type="evidence" value="ECO:0007669"/>
    <property type="project" value="UniProtKB-EC"/>
</dbReference>
<dbReference type="GO" id="GO:0099618">
    <property type="term" value="F:UDP-glucuronate dehydrogenase activity"/>
    <property type="evidence" value="ECO:0007669"/>
    <property type="project" value="UniProtKB-EC"/>
</dbReference>
<dbReference type="GO" id="GO:0009245">
    <property type="term" value="P:lipid A biosynthetic process"/>
    <property type="evidence" value="ECO:0007669"/>
    <property type="project" value="UniProtKB-KW"/>
</dbReference>
<dbReference type="GO" id="GO:0009103">
    <property type="term" value="P:lipopolysaccharide biosynthetic process"/>
    <property type="evidence" value="ECO:0007669"/>
    <property type="project" value="UniProtKB-UniRule"/>
</dbReference>
<dbReference type="GO" id="GO:0046677">
    <property type="term" value="P:response to antibiotic"/>
    <property type="evidence" value="ECO:0007669"/>
    <property type="project" value="UniProtKB-KW"/>
</dbReference>
<dbReference type="CDD" id="cd08702">
    <property type="entry name" value="Arna_FMT_C"/>
    <property type="match status" value="1"/>
</dbReference>
<dbReference type="CDD" id="cd05257">
    <property type="entry name" value="Arna_like_SDR_e"/>
    <property type="match status" value="1"/>
</dbReference>
<dbReference type="FunFam" id="3.40.50.720:FF:000197">
    <property type="entry name" value="Bifunctional polymyxin resistance protein ArnA"/>
    <property type="match status" value="1"/>
</dbReference>
<dbReference type="Gene3D" id="3.40.50.12230">
    <property type="match status" value="1"/>
</dbReference>
<dbReference type="Gene3D" id="3.40.50.720">
    <property type="entry name" value="NAD(P)-binding Rossmann-like Domain"/>
    <property type="match status" value="1"/>
</dbReference>
<dbReference type="HAMAP" id="MF_01166">
    <property type="entry name" value="ArnA"/>
    <property type="match status" value="1"/>
</dbReference>
<dbReference type="InterPro" id="IPR045869">
    <property type="entry name" value="Arna-like_SDR_e"/>
</dbReference>
<dbReference type="InterPro" id="IPR021168">
    <property type="entry name" value="Bifun_polymyxin_resist_ArnA"/>
</dbReference>
<dbReference type="InterPro" id="IPR001509">
    <property type="entry name" value="Epimerase_deHydtase"/>
</dbReference>
<dbReference type="InterPro" id="IPR005793">
    <property type="entry name" value="Formyl_trans_C"/>
</dbReference>
<dbReference type="InterPro" id="IPR002376">
    <property type="entry name" value="Formyl_transf_N"/>
</dbReference>
<dbReference type="InterPro" id="IPR036477">
    <property type="entry name" value="Formyl_transf_N_sf"/>
</dbReference>
<dbReference type="InterPro" id="IPR011034">
    <property type="entry name" value="Formyl_transferase-like_C_sf"/>
</dbReference>
<dbReference type="InterPro" id="IPR050177">
    <property type="entry name" value="Lipid_A_modif_metabolic_enz"/>
</dbReference>
<dbReference type="InterPro" id="IPR036291">
    <property type="entry name" value="NAD(P)-bd_dom_sf"/>
</dbReference>
<dbReference type="NCBIfam" id="NF005414">
    <property type="entry name" value="PRK06988.1"/>
    <property type="match status" value="1"/>
</dbReference>
<dbReference type="NCBIfam" id="NF005998">
    <property type="entry name" value="PRK08125.1"/>
    <property type="match status" value="1"/>
</dbReference>
<dbReference type="NCBIfam" id="NF008872">
    <property type="entry name" value="PRK11908.1"/>
    <property type="match status" value="1"/>
</dbReference>
<dbReference type="PANTHER" id="PTHR43245">
    <property type="entry name" value="BIFUNCTIONAL POLYMYXIN RESISTANCE PROTEIN ARNA"/>
    <property type="match status" value="1"/>
</dbReference>
<dbReference type="PANTHER" id="PTHR43245:SF13">
    <property type="entry name" value="UDP-D-APIOSE_UDP-D-XYLOSE SYNTHASE 2"/>
    <property type="match status" value="1"/>
</dbReference>
<dbReference type="Pfam" id="PF01370">
    <property type="entry name" value="Epimerase"/>
    <property type="match status" value="1"/>
</dbReference>
<dbReference type="Pfam" id="PF02911">
    <property type="entry name" value="Formyl_trans_C"/>
    <property type="match status" value="1"/>
</dbReference>
<dbReference type="Pfam" id="PF00551">
    <property type="entry name" value="Formyl_trans_N"/>
    <property type="match status" value="1"/>
</dbReference>
<dbReference type="PIRSF" id="PIRSF036506">
    <property type="entry name" value="Bifun_polymyxin_resist_ArnA"/>
    <property type="match status" value="1"/>
</dbReference>
<dbReference type="SUPFAM" id="SSF50486">
    <property type="entry name" value="FMT C-terminal domain-like"/>
    <property type="match status" value="1"/>
</dbReference>
<dbReference type="SUPFAM" id="SSF53328">
    <property type="entry name" value="Formyltransferase"/>
    <property type="match status" value="1"/>
</dbReference>
<dbReference type="SUPFAM" id="SSF51735">
    <property type="entry name" value="NAD(P)-binding Rossmann-fold domains"/>
    <property type="match status" value="1"/>
</dbReference>
<name>ARNA_PSEP7</name>
<comment type="function">
    <text evidence="1">Bifunctional enzyme that catalyzes the oxidative decarboxylation of UDP-glucuronic acid (UDP-GlcUA) to UDP-4-keto-arabinose (UDP-Ara4O) and the addition of a formyl group to UDP-4-amino-4-deoxy-L-arabinose (UDP-L-Ara4N) to form UDP-L-4-formamido-arabinose (UDP-L-Ara4FN). The modified arabinose is attached to lipid A and is required for resistance to polymyxin and cationic antimicrobial peptides.</text>
</comment>
<comment type="catalytic activity">
    <reaction evidence="1">
        <text>UDP-alpha-D-glucuronate + NAD(+) = UDP-beta-L-threo-pentopyranos-4-ulose + CO2 + NADH</text>
        <dbReference type="Rhea" id="RHEA:24702"/>
        <dbReference type="ChEBI" id="CHEBI:16526"/>
        <dbReference type="ChEBI" id="CHEBI:57540"/>
        <dbReference type="ChEBI" id="CHEBI:57945"/>
        <dbReference type="ChEBI" id="CHEBI:58052"/>
        <dbReference type="ChEBI" id="CHEBI:58710"/>
        <dbReference type="EC" id="1.1.1.305"/>
    </reaction>
</comment>
<comment type="catalytic activity">
    <reaction evidence="1">
        <text>UDP-4-amino-4-deoxy-beta-L-arabinose + (6R)-10-formyltetrahydrofolate = UDP-4-deoxy-4-formamido-beta-L-arabinose + (6S)-5,6,7,8-tetrahydrofolate + H(+)</text>
        <dbReference type="Rhea" id="RHEA:24706"/>
        <dbReference type="ChEBI" id="CHEBI:15378"/>
        <dbReference type="ChEBI" id="CHEBI:57453"/>
        <dbReference type="ChEBI" id="CHEBI:58708"/>
        <dbReference type="ChEBI" id="CHEBI:58709"/>
        <dbReference type="ChEBI" id="CHEBI:195366"/>
        <dbReference type="EC" id="2.1.2.13"/>
    </reaction>
</comment>
<comment type="pathway">
    <text evidence="1">Nucleotide-sugar biosynthesis; UDP-4-deoxy-4-formamido-beta-L-arabinose biosynthesis; UDP-4-deoxy-4-formamido-beta-L-arabinose from UDP-alpha-D-glucuronate: step 1/3.</text>
</comment>
<comment type="pathway">
    <text evidence="1">Nucleotide-sugar biosynthesis; UDP-4-deoxy-4-formamido-beta-L-arabinose biosynthesis; UDP-4-deoxy-4-formamido-beta-L-arabinose from UDP-alpha-D-glucuronate: step 3/3.</text>
</comment>
<comment type="pathway">
    <text evidence="1">Bacterial outer membrane biogenesis; lipopolysaccharide biosynthesis.</text>
</comment>
<comment type="subunit">
    <text evidence="1">Homohexamer, formed by a dimer of trimers.</text>
</comment>
<comment type="similarity">
    <text evidence="1">In the N-terminal section; belongs to the Fmt family. UDP-L-Ara4N formyltransferase subfamily.</text>
</comment>
<comment type="similarity">
    <text evidence="1">In the C-terminal section; belongs to the NAD(P)-dependent epimerase/dehydratase family. UDP-glucuronic acid decarboxylase subfamily.</text>
</comment>
<gene>
    <name evidence="1" type="primary">arnA</name>
    <name type="ordered locus">PSPA7_1591</name>
</gene>
<reference key="1">
    <citation type="submission" date="2007-06" db="EMBL/GenBank/DDBJ databases">
        <authorList>
            <person name="Dodson R.J."/>
            <person name="Harkins D."/>
            <person name="Paulsen I.T."/>
        </authorList>
    </citation>
    <scope>NUCLEOTIDE SEQUENCE [LARGE SCALE GENOMIC DNA]</scope>
    <source>
        <strain>DSM 24068 / PA7</strain>
    </source>
</reference>
<organism>
    <name type="scientific">Pseudomonas paraeruginosa (strain DSM 24068 / PA7)</name>
    <name type="common">Pseudomonas aeruginosa (strain PA7)</name>
    <dbReference type="NCBI Taxonomy" id="381754"/>
    <lineage>
        <taxon>Bacteria</taxon>
        <taxon>Pseudomonadati</taxon>
        <taxon>Pseudomonadota</taxon>
        <taxon>Gammaproteobacteria</taxon>
        <taxon>Pseudomonadales</taxon>
        <taxon>Pseudomonadaceae</taxon>
        <taxon>Pseudomonas</taxon>
        <taxon>Pseudomonas paraeruginosa</taxon>
    </lineage>
</organism>
<keyword id="KW-0046">Antibiotic resistance</keyword>
<keyword id="KW-0441">Lipid A biosynthesis</keyword>
<keyword id="KW-0444">Lipid biosynthesis</keyword>
<keyword id="KW-0443">Lipid metabolism</keyword>
<keyword id="KW-0448">Lipopolysaccharide biosynthesis</keyword>
<keyword id="KW-0511">Multifunctional enzyme</keyword>
<keyword id="KW-0520">NAD</keyword>
<keyword id="KW-0560">Oxidoreductase</keyword>
<keyword id="KW-0808">Transferase</keyword>
<protein>
    <recommendedName>
        <fullName evidence="1">Bifunctional polymyxin resistance protein ArnA</fullName>
    </recommendedName>
    <domain>
        <recommendedName>
            <fullName evidence="1">UDP-4-amino-4-deoxy-L-arabinose formyltransferase</fullName>
            <ecNumber evidence="1">2.1.2.13</ecNumber>
        </recommendedName>
        <alternativeName>
            <fullName evidence="1">ArnAFT</fullName>
        </alternativeName>
        <alternativeName>
            <fullName evidence="1">UDP-L-Ara4N formyltransferase</fullName>
        </alternativeName>
    </domain>
    <domain>
        <recommendedName>
            <fullName evidence="1">UDP-glucuronic acid oxidase, UDP-4-keto-hexauronic acid decarboxylating</fullName>
            <ecNumber evidence="1">1.1.1.305</ecNumber>
        </recommendedName>
        <alternativeName>
            <fullName evidence="1">ArnADH</fullName>
        </alternativeName>
        <alternativeName>
            <fullName evidence="1">UDP-GlcUA decarboxylase</fullName>
        </alternativeName>
        <alternativeName>
            <fullName evidence="1">UDP-glucuronic acid dehydrogenase</fullName>
        </alternativeName>
    </domain>
</protein>
<sequence>MTSKAVVFAYHDIGCTGIEALLNAGYEIAAVFTHADDPRENTFYASVARLCAERGIALHAPEDVNHPLWLERIRQLRPDFLFSFYYRRLLGAELLACAARGAYNLHGSLLPRYRGRAPANWVLVNGETQTGVTLHRMVERADAGPILAQQAVAIDPEDTALSLHGKLRKAAGALLRDSLPLLALGVLPEVEQDESQASHFGRRTAADGLLDWHRPARQLYDLVRAVTQPYPGAFCQVGEQKLIVWSAEVVAGNHGREPGSVLSCDPLRIACGEDSLVLRFGQRGERGLYLAGTQLATELGLVEGARLRGPASGPQRRTRVLILGVNGFIGNHLSERLLRDGRYEVHGMDIGSDAIERLKADPHFHFVEGDIGIHSEWLEYHVKKCDVILPLVAIATPIEYTRNPLRVFELDFEENLRIVRYCVKYGKRVVFPSTSEVYGMCQDPDFDEDRSNLVVGPINKQRWIYSVSKQLLDRVIWAYGQQGLRFTLFRPFNWMGPRLDRLESARIGSSRAITQLILHLVEGTPIRLVDGGAQKRCFTDVDDGIEALARIIDNRDGRCDGQIVNIGNPDNEASIRQLGEELLRQFEAHPLRAQFPPFAGFREVESRSFYGDGYQDVAHRKPSIENARRLLDWQPAIELRETIGKTLDFFLHEALREREAQA</sequence>